<accession>Q6FD83</accession>
<protein>
    <recommendedName>
        <fullName evidence="1">Urease subunit alpha</fullName>
        <ecNumber evidence="1">3.5.1.5</ecNumber>
    </recommendedName>
    <alternativeName>
        <fullName evidence="1">Urea amidohydrolase subunit alpha</fullName>
    </alternativeName>
</protein>
<gene>
    <name evidence="1" type="primary">ureC</name>
    <name type="ordered locus">ACIAD1091</name>
</gene>
<sequence length="566" mass="61192">MKMSRRAYAEMFGPTVGDRVRLADTELFIEVEQDLTTYGEEVKFGGGKVIRDGMGQSQLLADEVADTVITNALIVDWWGIVKADVGLKNGRIWKIGKAGNPDIQPDITIPLGAATEVIAGEGQILTAGGIDTHIHWICPQQVETALMSGVTTMVGGGTGPAAGTSATTVTPGPWHIGTMLQAIDDLPMNIGLLGKGNLSLPDPIREQIKAGVVGLKLHEDWGSTPAAIDNCLSVADEFDVQVAIHTDTLNESGFLEETLAAFKNRTIHTYHTEGAGGGHAPDILKAIGQANVLPSSTNPTRPYTINTIDEHLDMLMVCHHLDPAIAEDVAFAESRIRRETIAAEDILQDLGAIAMMSSDSQAMGRVGEVIIRTWQTAHKMKVQRGALQGDETSHDNSRVKRYIAKYTINPAITHGLSHEIGSVEEGKLADLVLWKPAFFGVKPSMIIKGGMIAAAPMGDINASIPTPQPVHYRPMFGAYPRGVHNTCITFLSQAAIDDGVAEKLKLKKLISPCKNTRQITKADMKHNTYCPVMDVHPETYEVRADGELLTCEPADVLPMAQRYFLF</sequence>
<evidence type="ECO:0000255" key="1">
    <source>
        <dbReference type="HAMAP-Rule" id="MF_01953"/>
    </source>
</evidence>
<reference key="1">
    <citation type="journal article" date="2004" name="Nucleic Acids Res.">
        <title>Unique features revealed by the genome sequence of Acinetobacter sp. ADP1, a versatile and naturally transformation competent bacterium.</title>
        <authorList>
            <person name="Barbe V."/>
            <person name="Vallenet D."/>
            <person name="Fonknechten N."/>
            <person name="Kreimeyer A."/>
            <person name="Oztas S."/>
            <person name="Labarre L."/>
            <person name="Cruveiller S."/>
            <person name="Robert C."/>
            <person name="Duprat S."/>
            <person name="Wincker P."/>
            <person name="Ornston L.N."/>
            <person name="Weissenbach J."/>
            <person name="Marliere P."/>
            <person name="Cohen G.N."/>
            <person name="Medigue C."/>
        </authorList>
    </citation>
    <scope>NUCLEOTIDE SEQUENCE [LARGE SCALE GENOMIC DNA]</scope>
    <source>
        <strain>ATCC 33305 / BD413 / ADP1</strain>
    </source>
</reference>
<keyword id="KW-0963">Cytoplasm</keyword>
<keyword id="KW-0378">Hydrolase</keyword>
<keyword id="KW-0479">Metal-binding</keyword>
<keyword id="KW-0533">Nickel</keyword>
<organism>
    <name type="scientific">Acinetobacter baylyi (strain ATCC 33305 / BD413 / ADP1)</name>
    <dbReference type="NCBI Taxonomy" id="62977"/>
    <lineage>
        <taxon>Bacteria</taxon>
        <taxon>Pseudomonadati</taxon>
        <taxon>Pseudomonadota</taxon>
        <taxon>Gammaproteobacteria</taxon>
        <taxon>Moraxellales</taxon>
        <taxon>Moraxellaceae</taxon>
        <taxon>Acinetobacter</taxon>
    </lineage>
</organism>
<dbReference type="EC" id="3.5.1.5" evidence="1"/>
<dbReference type="EMBL" id="CR543861">
    <property type="protein sequence ID" value="CAG67976.1"/>
    <property type="molecule type" value="Genomic_DNA"/>
</dbReference>
<dbReference type="RefSeq" id="WP_004921563.1">
    <property type="nucleotide sequence ID" value="NC_005966.1"/>
</dbReference>
<dbReference type="SMR" id="Q6FD83"/>
<dbReference type="STRING" id="202950.GCA_001485005_01276"/>
<dbReference type="MEROPS" id="M38.982"/>
<dbReference type="GeneID" id="45233527"/>
<dbReference type="KEGG" id="aci:ACIAD1091"/>
<dbReference type="eggNOG" id="COG0804">
    <property type="taxonomic scope" value="Bacteria"/>
</dbReference>
<dbReference type="HOGENOM" id="CLU_000980_0_0_6"/>
<dbReference type="OrthoDB" id="9802793at2"/>
<dbReference type="BioCyc" id="ASP62977:ACIAD_RS05015-MONOMER"/>
<dbReference type="UniPathway" id="UPA00258">
    <property type="reaction ID" value="UER00370"/>
</dbReference>
<dbReference type="Proteomes" id="UP000000430">
    <property type="component" value="Chromosome"/>
</dbReference>
<dbReference type="GO" id="GO:0005737">
    <property type="term" value="C:cytoplasm"/>
    <property type="evidence" value="ECO:0007669"/>
    <property type="project" value="UniProtKB-SubCell"/>
</dbReference>
<dbReference type="GO" id="GO:0016151">
    <property type="term" value="F:nickel cation binding"/>
    <property type="evidence" value="ECO:0007669"/>
    <property type="project" value="UniProtKB-UniRule"/>
</dbReference>
<dbReference type="GO" id="GO:0009039">
    <property type="term" value="F:urease activity"/>
    <property type="evidence" value="ECO:0007669"/>
    <property type="project" value="UniProtKB-UniRule"/>
</dbReference>
<dbReference type="GO" id="GO:0043419">
    <property type="term" value="P:urea catabolic process"/>
    <property type="evidence" value="ECO:0007669"/>
    <property type="project" value="UniProtKB-UniRule"/>
</dbReference>
<dbReference type="CDD" id="cd00375">
    <property type="entry name" value="Urease_alpha"/>
    <property type="match status" value="1"/>
</dbReference>
<dbReference type="Gene3D" id="3.20.20.140">
    <property type="entry name" value="Metal-dependent hydrolases"/>
    <property type="match status" value="1"/>
</dbReference>
<dbReference type="Gene3D" id="2.30.40.10">
    <property type="entry name" value="Urease, subunit C, domain 1"/>
    <property type="match status" value="1"/>
</dbReference>
<dbReference type="HAMAP" id="MF_01953">
    <property type="entry name" value="Urease_alpha"/>
    <property type="match status" value="1"/>
</dbReference>
<dbReference type="InterPro" id="IPR006680">
    <property type="entry name" value="Amidohydro-rel"/>
</dbReference>
<dbReference type="InterPro" id="IPR011059">
    <property type="entry name" value="Metal-dep_hydrolase_composite"/>
</dbReference>
<dbReference type="InterPro" id="IPR032466">
    <property type="entry name" value="Metal_Hydrolase"/>
</dbReference>
<dbReference type="InterPro" id="IPR011612">
    <property type="entry name" value="Urease_alpha_N_dom"/>
</dbReference>
<dbReference type="InterPro" id="IPR050112">
    <property type="entry name" value="Urease_alpha_subunit"/>
</dbReference>
<dbReference type="InterPro" id="IPR017950">
    <property type="entry name" value="Urease_AS"/>
</dbReference>
<dbReference type="InterPro" id="IPR005848">
    <property type="entry name" value="Urease_asu"/>
</dbReference>
<dbReference type="InterPro" id="IPR017951">
    <property type="entry name" value="Urease_asu_c"/>
</dbReference>
<dbReference type="InterPro" id="IPR029754">
    <property type="entry name" value="Urease_Ni-bd"/>
</dbReference>
<dbReference type="NCBIfam" id="NF009685">
    <property type="entry name" value="PRK13206.1"/>
    <property type="match status" value="1"/>
</dbReference>
<dbReference type="NCBIfam" id="NF009686">
    <property type="entry name" value="PRK13207.1"/>
    <property type="match status" value="1"/>
</dbReference>
<dbReference type="NCBIfam" id="TIGR01792">
    <property type="entry name" value="urease_alph"/>
    <property type="match status" value="1"/>
</dbReference>
<dbReference type="PANTHER" id="PTHR43440">
    <property type="entry name" value="UREASE"/>
    <property type="match status" value="1"/>
</dbReference>
<dbReference type="PANTHER" id="PTHR43440:SF1">
    <property type="entry name" value="UREASE"/>
    <property type="match status" value="1"/>
</dbReference>
<dbReference type="Pfam" id="PF01979">
    <property type="entry name" value="Amidohydro_1"/>
    <property type="match status" value="1"/>
</dbReference>
<dbReference type="Pfam" id="PF00449">
    <property type="entry name" value="Urease_alpha"/>
    <property type="match status" value="1"/>
</dbReference>
<dbReference type="PRINTS" id="PR01752">
    <property type="entry name" value="UREASE"/>
</dbReference>
<dbReference type="SUPFAM" id="SSF51338">
    <property type="entry name" value="Composite domain of metallo-dependent hydrolases"/>
    <property type="match status" value="2"/>
</dbReference>
<dbReference type="SUPFAM" id="SSF51556">
    <property type="entry name" value="Metallo-dependent hydrolases"/>
    <property type="match status" value="1"/>
</dbReference>
<dbReference type="PROSITE" id="PS01120">
    <property type="entry name" value="UREASE_1"/>
    <property type="match status" value="1"/>
</dbReference>
<dbReference type="PROSITE" id="PS00145">
    <property type="entry name" value="UREASE_2"/>
    <property type="match status" value="1"/>
</dbReference>
<dbReference type="PROSITE" id="PS51368">
    <property type="entry name" value="UREASE_3"/>
    <property type="match status" value="1"/>
</dbReference>
<name>URE1_ACIAD</name>
<comment type="catalytic activity">
    <reaction evidence="1">
        <text>urea + 2 H2O + H(+) = hydrogencarbonate + 2 NH4(+)</text>
        <dbReference type="Rhea" id="RHEA:20557"/>
        <dbReference type="ChEBI" id="CHEBI:15377"/>
        <dbReference type="ChEBI" id="CHEBI:15378"/>
        <dbReference type="ChEBI" id="CHEBI:16199"/>
        <dbReference type="ChEBI" id="CHEBI:17544"/>
        <dbReference type="ChEBI" id="CHEBI:28938"/>
        <dbReference type="EC" id="3.5.1.5"/>
    </reaction>
</comment>
<comment type="cofactor">
    <cofactor evidence="1">
        <name>Ni cation</name>
        <dbReference type="ChEBI" id="CHEBI:25516"/>
    </cofactor>
    <text evidence="1">Binds 2 nickel ions per subunit.</text>
</comment>
<comment type="pathway">
    <text evidence="1">Nitrogen metabolism; urea degradation; CO(2) and NH(3) from urea (urease route): step 1/1.</text>
</comment>
<comment type="subunit">
    <text evidence="1">Heterotrimer of UreA (gamma), UreB (beta) and UreC (alpha) subunits. Three heterotrimers associate to form the active enzyme.</text>
</comment>
<comment type="subcellular location">
    <subcellularLocation>
        <location evidence="1">Cytoplasm</location>
    </subcellularLocation>
</comment>
<comment type="PTM">
    <text evidence="1">Carboxylation allows a single lysine to coordinate two nickel ions.</text>
</comment>
<comment type="similarity">
    <text evidence="1">Belongs to the metallo-dependent hydrolases superfamily. Urease alpha subunit family.</text>
</comment>
<proteinExistence type="inferred from homology"/>
<feature type="chain" id="PRO_0000234129" description="Urease subunit alpha">
    <location>
        <begin position="1"/>
        <end position="566"/>
    </location>
</feature>
<feature type="domain" description="Urease" evidence="1">
    <location>
        <begin position="128"/>
        <end position="566"/>
    </location>
</feature>
<feature type="active site" description="Proton donor" evidence="1">
    <location>
        <position position="319"/>
    </location>
</feature>
<feature type="binding site" evidence="1">
    <location>
        <position position="133"/>
    </location>
    <ligand>
        <name>Ni(2+)</name>
        <dbReference type="ChEBI" id="CHEBI:49786"/>
        <label>1</label>
    </ligand>
</feature>
<feature type="binding site" evidence="1">
    <location>
        <position position="135"/>
    </location>
    <ligand>
        <name>Ni(2+)</name>
        <dbReference type="ChEBI" id="CHEBI:49786"/>
        <label>1</label>
    </ligand>
</feature>
<feature type="binding site" description="via carbamate group" evidence="1">
    <location>
        <position position="216"/>
    </location>
    <ligand>
        <name>Ni(2+)</name>
        <dbReference type="ChEBI" id="CHEBI:49786"/>
        <label>1</label>
    </ligand>
</feature>
<feature type="binding site" description="via carbamate group" evidence="1">
    <location>
        <position position="216"/>
    </location>
    <ligand>
        <name>Ni(2+)</name>
        <dbReference type="ChEBI" id="CHEBI:49786"/>
        <label>2</label>
    </ligand>
</feature>
<feature type="binding site" evidence="1">
    <location>
        <position position="218"/>
    </location>
    <ligand>
        <name>substrate</name>
    </ligand>
</feature>
<feature type="binding site" evidence="1">
    <location>
        <position position="245"/>
    </location>
    <ligand>
        <name>Ni(2+)</name>
        <dbReference type="ChEBI" id="CHEBI:49786"/>
        <label>2</label>
    </ligand>
</feature>
<feature type="binding site" evidence="1">
    <location>
        <position position="271"/>
    </location>
    <ligand>
        <name>Ni(2+)</name>
        <dbReference type="ChEBI" id="CHEBI:49786"/>
        <label>2</label>
    </ligand>
</feature>
<feature type="binding site" evidence="1">
    <location>
        <position position="359"/>
    </location>
    <ligand>
        <name>Ni(2+)</name>
        <dbReference type="ChEBI" id="CHEBI:49786"/>
        <label>1</label>
    </ligand>
</feature>
<feature type="modified residue" description="N6-carboxylysine" evidence="1">
    <location>
        <position position="216"/>
    </location>
</feature>